<accession>A9R5R3</accession>
<proteinExistence type="inferred from homology"/>
<organism>
    <name type="scientific">Yersinia pestis bv. Antiqua (strain Angola)</name>
    <dbReference type="NCBI Taxonomy" id="349746"/>
    <lineage>
        <taxon>Bacteria</taxon>
        <taxon>Pseudomonadati</taxon>
        <taxon>Pseudomonadota</taxon>
        <taxon>Gammaproteobacteria</taxon>
        <taxon>Enterobacterales</taxon>
        <taxon>Yersiniaceae</taxon>
        <taxon>Yersinia</taxon>
    </lineage>
</organism>
<evidence type="ECO:0000255" key="1">
    <source>
        <dbReference type="HAMAP-Rule" id="MF_00365"/>
    </source>
</evidence>
<keyword id="KW-0067">ATP-binding</keyword>
<keyword id="KW-0963">Cytoplasm</keyword>
<keyword id="KW-0227">DNA damage</keyword>
<keyword id="KW-0234">DNA repair</keyword>
<keyword id="KW-0235">DNA replication</keyword>
<keyword id="KW-0238">DNA-binding</keyword>
<keyword id="KW-0547">Nucleotide-binding</keyword>
<keyword id="KW-0742">SOS response</keyword>
<sequence length="361" mass="40468">MALTRLLIKDFRNIESADLALAAGFNFLVGPNGSGKTSVLEAVYTLGHGRAFRSLQAGRVIRHECAEFVLHGRVDANEREASVGLSKSRQGDTKVRIDGTDGHKVAELAQMLPMQLITPEGFTLLNGGPKFRRAFLDWGCFHNEPGFFTAWSNLKRLLKQRNAALRQVSRYTQIRAWDQEIIPLAERISEWRAAYSDAIAADISATCALFLPEFALSFSFQRGWDKESDYGELLARQFERDRALTYTAVGPHKADFRIRADGTPVEDLLSRGQLKLLMCALRLAQGEFLTRQSGRRCLYLLDDFASELDTGRRRLLAERLKATQAQVFVSAVSAEQVADMVGEKGKMFRVEHGKIEVQPQD</sequence>
<reference key="1">
    <citation type="journal article" date="2010" name="J. Bacteriol.">
        <title>Genome sequence of the deep-rooted Yersinia pestis strain Angola reveals new insights into the evolution and pangenome of the plague bacterium.</title>
        <authorList>
            <person name="Eppinger M."/>
            <person name="Worsham P.L."/>
            <person name="Nikolich M.P."/>
            <person name="Riley D.R."/>
            <person name="Sebastian Y."/>
            <person name="Mou S."/>
            <person name="Achtman M."/>
            <person name="Lindler L.E."/>
            <person name="Ravel J."/>
        </authorList>
    </citation>
    <scope>NUCLEOTIDE SEQUENCE [LARGE SCALE GENOMIC DNA]</scope>
    <source>
        <strain>Angola</strain>
    </source>
</reference>
<dbReference type="EMBL" id="CP000901">
    <property type="protein sequence ID" value="ABX88181.1"/>
    <property type="molecule type" value="Genomic_DNA"/>
</dbReference>
<dbReference type="RefSeq" id="WP_002209643.1">
    <property type="nucleotide sequence ID" value="NZ_CP009935.1"/>
</dbReference>
<dbReference type="SMR" id="A9R5R3"/>
<dbReference type="GeneID" id="57974627"/>
<dbReference type="KEGG" id="ypg:YpAngola_A4175"/>
<dbReference type="PATRIC" id="fig|349746.12.peg.911"/>
<dbReference type="GO" id="GO:0005737">
    <property type="term" value="C:cytoplasm"/>
    <property type="evidence" value="ECO:0007669"/>
    <property type="project" value="UniProtKB-SubCell"/>
</dbReference>
<dbReference type="GO" id="GO:0005524">
    <property type="term" value="F:ATP binding"/>
    <property type="evidence" value="ECO:0007669"/>
    <property type="project" value="UniProtKB-UniRule"/>
</dbReference>
<dbReference type="GO" id="GO:0003697">
    <property type="term" value="F:single-stranded DNA binding"/>
    <property type="evidence" value="ECO:0007669"/>
    <property type="project" value="UniProtKB-UniRule"/>
</dbReference>
<dbReference type="GO" id="GO:0006260">
    <property type="term" value="P:DNA replication"/>
    <property type="evidence" value="ECO:0007669"/>
    <property type="project" value="UniProtKB-UniRule"/>
</dbReference>
<dbReference type="GO" id="GO:0000731">
    <property type="term" value="P:DNA synthesis involved in DNA repair"/>
    <property type="evidence" value="ECO:0007669"/>
    <property type="project" value="TreeGrafter"/>
</dbReference>
<dbReference type="GO" id="GO:0006302">
    <property type="term" value="P:double-strand break repair"/>
    <property type="evidence" value="ECO:0007669"/>
    <property type="project" value="TreeGrafter"/>
</dbReference>
<dbReference type="GO" id="GO:0009432">
    <property type="term" value="P:SOS response"/>
    <property type="evidence" value="ECO:0007669"/>
    <property type="project" value="UniProtKB-UniRule"/>
</dbReference>
<dbReference type="FunFam" id="1.20.1050.90:FF:000001">
    <property type="entry name" value="DNA replication and repair protein RecF"/>
    <property type="match status" value="1"/>
</dbReference>
<dbReference type="Gene3D" id="3.40.50.300">
    <property type="entry name" value="P-loop containing nucleotide triphosphate hydrolases"/>
    <property type="match status" value="1"/>
</dbReference>
<dbReference type="Gene3D" id="1.20.1050.90">
    <property type="entry name" value="RecF/RecN/SMC, N-terminal domain"/>
    <property type="match status" value="1"/>
</dbReference>
<dbReference type="HAMAP" id="MF_00365">
    <property type="entry name" value="RecF"/>
    <property type="match status" value="1"/>
</dbReference>
<dbReference type="InterPro" id="IPR001238">
    <property type="entry name" value="DNA-binding_RecF"/>
</dbReference>
<dbReference type="InterPro" id="IPR018078">
    <property type="entry name" value="DNA-binding_RecF_CS"/>
</dbReference>
<dbReference type="InterPro" id="IPR027417">
    <property type="entry name" value="P-loop_NTPase"/>
</dbReference>
<dbReference type="InterPro" id="IPR003395">
    <property type="entry name" value="RecF/RecN/SMC_N"/>
</dbReference>
<dbReference type="InterPro" id="IPR042174">
    <property type="entry name" value="RecF_2"/>
</dbReference>
<dbReference type="NCBIfam" id="TIGR00611">
    <property type="entry name" value="recf"/>
    <property type="match status" value="1"/>
</dbReference>
<dbReference type="PANTHER" id="PTHR32182">
    <property type="entry name" value="DNA REPLICATION AND REPAIR PROTEIN RECF"/>
    <property type="match status" value="1"/>
</dbReference>
<dbReference type="PANTHER" id="PTHR32182:SF0">
    <property type="entry name" value="DNA REPLICATION AND REPAIR PROTEIN RECF"/>
    <property type="match status" value="1"/>
</dbReference>
<dbReference type="Pfam" id="PF02463">
    <property type="entry name" value="SMC_N"/>
    <property type="match status" value="1"/>
</dbReference>
<dbReference type="SUPFAM" id="SSF52540">
    <property type="entry name" value="P-loop containing nucleoside triphosphate hydrolases"/>
    <property type="match status" value="1"/>
</dbReference>
<dbReference type="PROSITE" id="PS00617">
    <property type="entry name" value="RECF_1"/>
    <property type="match status" value="1"/>
</dbReference>
<dbReference type="PROSITE" id="PS00618">
    <property type="entry name" value="RECF_2"/>
    <property type="match status" value="1"/>
</dbReference>
<name>RECF_YERPG</name>
<comment type="function">
    <text evidence="1">The RecF protein is involved in DNA metabolism; it is required for DNA replication and normal SOS inducibility. RecF binds preferentially to single-stranded, linear DNA. It also seems to bind ATP.</text>
</comment>
<comment type="subcellular location">
    <subcellularLocation>
        <location evidence="1">Cytoplasm</location>
    </subcellularLocation>
</comment>
<comment type="similarity">
    <text evidence="1">Belongs to the RecF family.</text>
</comment>
<protein>
    <recommendedName>
        <fullName evidence="1">DNA replication and repair protein RecF</fullName>
    </recommendedName>
</protein>
<gene>
    <name evidence="1" type="primary">recF</name>
    <name type="ordered locus">YpAngola_A4175</name>
</gene>
<feature type="chain" id="PRO_1000121172" description="DNA replication and repair protein RecF">
    <location>
        <begin position="1"/>
        <end position="361"/>
    </location>
</feature>
<feature type="binding site" evidence="1">
    <location>
        <begin position="30"/>
        <end position="37"/>
    </location>
    <ligand>
        <name>ATP</name>
        <dbReference type="ChEBI" id="CHEBI:30616"/>
    </ligand>
</feature>